<accession>Q5JTD0</accession>
<accession>Q05BH9</accession>
<accession>Q5JTD1</accession>
<accession>Q5JWW1</accession>
<accession>Q68DB2</accession>
<accession>Q6P2P3</accession>
<accession>Q9H7V7</accession>
<protein>
    <recommendedName>
        <fullName>Tight junction-associated protein 1</fullName>
    </recommendedName>
    <alternativeName>
        <fullName>Protein incorporated later into tight junctions</fullName>
    </alternativeName>
    <alternativeName>
        <fullName>Tight junction protein 4</fullName>
    </alternativeName>
</protein>
<dbReference type="EMBL" id="AK024269">
    <property type="protein sequence ID" value="BAB14867.1"/>
    <property type="molecule type" value="mRNA"/>
</dbReference>
<dbReference type="EMBL" id="CR749480">
    <property type="protein sequence ID" value="CAH18308.1"/>
    <property type="molecule type" value="mRNA"/>
</dbReference>
<dbReference type="EMBL" id="AL117398">
    <property type="protein sequence ID" value="CAI46221.1"/>
    <property type="molecule type" value="Transcribed_RNA"/>
</dbReference>
<dbReference type="EMBL" id="AL355802">
    <property type="status" value="NOT_ANNOTATED_CDS"/>
    <property type="molecule type" value="Genomic_DNA"/>
</dbReference>
<dbReference type="EMBL" id="BC046239">
    <property type="protein sequence ID" value="AAH46239.1"/>
    <property type="molecule type" value="mRNA"/>
</dbReference>
<dbReference type="EMBL" id="BC064401">
    <property type="protein sequence ID" value="AAH64401.1"/>
    <property type="molecule type" value="mRNA"/>
</dbReference>
<dbReference type="CCDS" id="CCDS4898.1">
    <molecule id="Q5JTD0-2"/>
</dbReference>
<dbReference type="CCDS" id="CCDS55004.1">
    <molecule id="Q5JTD0-1"/>
</dbReference>
<dbReference type="RefSeq" id="NP_001139488.1">
    <molecule id="Q5JTD0-1"/>
    <property type="nucleotide sequence ID" value="NM_001146016.2"/>
</dbReference>
<dbReference type="RefSeq" id="NP_001139489.1">
    <molecule id="Q5JTD0-1"/>
    <property type="nucleotide sequence ID" value="NM_001146017.2"/>
</dbReference>
<dbReference type="RefSeq" id="NP_001139490.1">
    <molecule id="Q5JTD0-2"/>
    <property type="nucleotide sequence ID" value="NM_001146018.2"/>
</dbReference>
<dbReference type="RefSeq" id="NP_001139491.1">
    <molecule id="Q5JTD0-2"/>
    <property type="nucleotide sequence ID" value="NM_001146019.2"/>
</dbReference>
<dbReference type="RefSeq" id="NP_001139492.1">
    <molecule id="Q5JTD0-2"/>
    <property type="nucleotide sequence ID" value="NM_001146020.2"/>
</dbReference>
<dbReference type="RefSeq" id="NP_001337490.1">
    <molecule id="Q5JTD0-1"/>
    <property type="nucleotide sequence ID" value="NM_001350561.2"/>
</dbReference>
<dbReference type="RefSeq" id="NP_001337491.1">
    <molecule id="Q5JTD0-1"/>
    <property type="nucleotide sequence ID" value="NM_001350562.2"/>
</dbReference>
<dbReference type="RefSeq" id="NP_001337492.1">
    <molecule id="Q5JTD0-1"/>
    <property type="nucleotide sequence ID" value="NM_001350563.2"/>
</dbReference>
<dbReference type="RefSeq" id="NP_001337493.1">
    <molecule id="Q5JTD0-1"/>
    <property type="nucleotide sequence ID" value="NM_001350564.2"/>
</dbReference>
<dbReference type="RefSeq" id="NP_001337494.1">
    <molecule id="Q5JTD0-1"/>
    <property type="nucleotide sequence ID" value="NM_001350565.2"/>
</dbReference>
<dbReference type="RefSeq" id="NP_001337495.1">
    <molecule id="Q5JTD0-1"/>
    <property type="nucleotide sequence ID" value="NM_001350566.2"/>
</dbReference>
<dbReference type="RefSeq" id="NP_001337496.1">
    <molecule id="Q5JTD0-1"/>
    <property type="nucleotide sequence ID" value="NM_001350567.2"/>
</dbReference>
<dbReference type="RefSeq" id="NP_001337497.1">
    <molecule id="Q5JTD0-1"/>
    <property type="nucleotide sequence ID" value="NM_001350568.2"/>
</dbReference>
<dbReference type="RefSeq" id="NP_001337498.1">
    <molecule id="Q5JTD0-2"/>
    <property type="nucleotide sequence ID" value="NM_001350569.2"/>
</dbReference>
<dbReference type="RefSeq" id="NP_001337499.1">
    <molecule id="Q5JTD0-2"/>
    <property type="nucleotide sequence ID" value="NM_001350570.2"/>
</dbReference>
<dbReference type="RefSeq" id="NP_542171.2">
    <molecule id="Q5JTD0-2"/>
    <property type="nucleotide sequence ID" value="NM_080604.3"/>
</dbReference>
<dbReference type="RefSeq" id="XP_006715312.1">
    <property type="nucleotide sequence ID" value="XM_006715249.1"/>
</dbReference>
<dbReference type="RefSeq" id="XP_006715313.1">
    <molecule id="Q5JTD0-1"/>
    <property type="nucleotide sequence ID" value="XM_006715250.5"/>
</dbReference>
<dbReference type="RefSeq" id="XP_006715314.1">
    <molecule id="Q5JTD0-1"/>
    <property type="nucleotide sequence ID" value="XM_006715251.4"/>
</dbReference>
<dbReference type="RefSeq" id="XP_006715315.1">
    <property type="nucleotide sequence ID" value="XM_006715252.2"/>
</dbReference>
<dbReference type="RefSeq" id="XP_006715317.1">
    <molecule id="Q5JTD0-1"/>
    <property type="nucleotide sequence ID" value="XM_006715254.5"/>
</dbReference>
<dbReference type="RefSeq" id="XP_006715319.1">
    <property type="nucleotide sequence ID" value="XM_006715256.1"/>
</dbReference>
<dbReference type="RefSeq" id="XP_006715320.1">
    <molecule id="Q5JTD0-1"/>
    <property type="nucleotide sequence ID" value="XM_006715257.3"/>
</dbReference>
<dbReference type="RefSeq" id="XP_006715322.1">
    <property type="nucleotide sequence ID" value="XM_006715259.3"/>
</dbReference>
<dbReference type="RefSeq" id="XP_006715323.1">
    <property type="nucleotide sequence ID" value="XM_006715260.1"/>
</dbReference>
<dbReference type="RefSeq" id="XP_006715324.1">
    <molecule id="Q5JTD0-1"/>
    <property type="nucleotide sequence ID" value="XM_006715261.2"/>
</dbReference>
<dbReference type="RefSeq" id="XP_006715325.1">
    <molecule id="Q5JTD0-1"/>
    <property type="nucleotide sequence ID" value="XM_006715262.3"/>
</dbReference>
<dbReference type="RefSeq" id="XP_006715326.1">
    <molecule id="Q5JTD0-1"/>
    <property type="nucleotide sequence ID" value="XM_006715263.3"/>
</dbReference>
<dbReference type="RefSeq" id="XP_006715328.1">
    <molecule id="Q5JTD0-2"/>
    <property type="nucleotide sequence ID" value="XM_006715265.2"/>
</dbReference>
<dbReference type="RefSeq" id="XP_006715329.1">
    <molecule id="Q5JTD0-2"/>
    <property type="nucleotide sequence ID" value="XM_006715266.2"/>
</dbReference>
<dbReference type="RefSeq" id="XP_011513297.1">
    <molecule id="Q5JTD0-1"/>
    <property type="nucleotide sequence ID" value="XM_011514995.2"/>
</dbReference>
<dbReference type="RefSeq" id="XP_016866977.1">
    <property type="nucleotide sequence ID" value="XM_017011488.1"/>
</dbReference>
<dbReference type="RefSeq" id="XP_016866978.1">
    <molecule id="Q5JTD0-1"/>
    <property type="nucleotide sequence ID" value="XM_017011489.2"/>
</dbReference>
<dbReference type="RefSeq" id="XP_016866979.1">
    <property type="nucleotide sequence ID" value="XM_017011490.1"/>
</dbReference>
<dbReference type="RefSeq" id="XP_016866980.1">
    <property type="nucleotide sequence ID" value="XM_017011491.1"/>
</dbReference>
<dbReference type="RefSeq" id="XP_016866981.1">
    <molecule id="Q5JTD0-2"/>
    <property type="nucleotide sequence ID" value="XM_017011492.2"/>
</dbReference>
<dbReference type="RefSeq" id="XP_016866982.1">
    <molecule id="Q5JTD0-2"/>
    <property type="nucleotide sequence ID" value="XM_017011493.2"/>
</dbReference>
<dbReference type="RefSeq" id="XP_024302352.1">
    <molecule id="Q5JTD0-1"/>
    <property type="nucleotide sequence ID" value="XM_024446584.2"/>
</dbReference>
<dbReference type="RefSeq" id="XP_024302353.1">
    <molecule id="Q5JTD0-1"/>
    <property type="nucleotide sequence ID" value="XM_024446585.2"/>
</dbReference>
<dbReference type="RefSeq" id="XP_024302354.1">
    <molecule id="Q5JTD0-1"/>
    <property type="nucleotide sequence ID" value="XM_024446586.2"/>
</dbReference>
<dbReference type="RefSeq" id="XP_024302355.1">
    <molecule id="Q5JTD0-2"/>
    <property type="nucleotide sequence ID" value="XM_024446587.2"/>
</dbReference>
<dbReference type="RefSeq" id="XP_047275485.1">
    <molecule id="Q5JTD0-1"/>
    <property type="nucleotide sequence ID" value="XM_047419529.1"/>
</dbReference>
<dbReference type="RefSeq" id="XP_047275486.1">
    <molecule id="Q5JTD0-1"/>
    <property type="nucleotide sequence ID" value="XM_047419530.1"/>
</dbReference>
<dbReference type="RefSeq" id="XP_047275487.1">
    <molecule id="Q5JTD0-1"/>
    <property type="nucleotide sequence ID" value="XM_047419531.1"/>
</dbReference>
<dbReference type="RefSeq" id="XP_047275488.1">
    <molecule id="Q5JTD0-1"/>
    <property type="nucleotide sequence ID" value="XM_047419532.1"/>
</dbReference>
<dbReference type="RefSeq" id="XP_047275489.1">
    <molecule id="Q5JTD0-1"/>
    <property type="nucleotide sequence ID" value="XM_047419533.1"/>
</dbReference>
<dbReference type="RefSeq" id="XP_047275490.1">
    <molecule id="Q5JTD0-2"/>
    <property type="nucleotide sequence ID" value="XM_047419534.1"/>
</dbReference>
<dbReference type="RefSeq" id="XP_047275491.1">
    <molecule id="Q5JTD0-2"/>
    <property type="nucleotide sequence ID" value="XM_047419535.1"/>
</dbReference>
<dbReference type="RefSeq" id="XP_047275492.1">
    <molecule id="Q5JTD0-2"/>
    <property type="nucleotide sequence ID" value="XM_047419536.1"/>
</dbReference>
<dbReference type="RefSeq" id="XP_047275493.1">
    <molecule id="Q5JTD0-2"/>
    <property type="nucleotide sequence ID" value="XM_047419537.1"/>
</dbReference>
<dbReference type="RefSeq" id="XP_047275494.1">
    <molecule id="Q5JTD0-2"/>
    <property type="nucleotide sequence ID" value="XM_047419538.1"/>
</dbReference>
<dbReference type="RefSeq" id="XP_047275496.1">
    <molecule id="Q5JTD0-2"/>
    <property type="nucleotide sequence ID" value="XM_047419540.1"/>
</dbReference>
<dbReference type="RefSeq" id="XP_047275497.1">
    <molecule id="Q5JTD0-2"/>
    <property type="nucleotide sequence ID" value="XM_047419541.1"/>
</dbReference>
<dbReference type="RefSeq" id="XP_047275498.1">
    <molecule id="Q5JTD0-2"/>
    <property type="nucleotide sequence ID" value="XM_047419542.1"/>
</dbReference>
<dbReference type="RefSeq" id="XP_047275499.1">
    <molecule id="Q5JTD0-2"/>
    <property type="nucleotide sequence ID" value="XM_047419543.1"/>
</dbReference>
<dbReference type="RefSeq" id="XP_047275500.1">
    <molecule id="Q5JTD0-2"/>
    <property type="nucleotide sequence ID" value="XM_047419544.1"/>
</dbReference>
<dbReference type="RefSeq" id="XP_047275501.1">
    <molecule id="Q5JTD0-2"/>
    <property type="nucleotide sequence ID" value="XM_047419545.1"/>
</dbReference>
<dbReference type="RefSeq" id="XP_054212732.1">
    <molecule id="Q5JTD0-1"/>
    <property type="nucleotide sequence ID" value="XM_054356757.1"/>
</dbReference>
<dbReference type="RefSeq" id="XP_054212733.1">
    <molecule id="Q5JTD0-1"/>
    <property type="nucleotide sequence ID" value="XM_054356758.1"/>
</dbReference>
<dbReference type="RefSeq" id="XP_054212734.1">
    <molecule id="Q5JTD0-1"/>
    <property type="nucleotide sequence ID" value="XM_054356759.1"/>
</dbReference>
<dbReference type="RefSeq" id="XP_054212735.1">
    <molecule id="Q5JTD0-1"/>
    <property type="nucleotide sequence ID" value="XM_054356760.1"/>
</dbReference>
<dbReference type="RefSeq" id="XP_054212736.1">
    <molecule id="Q5JTD0-1"/>
    <property type="nucleotide sequence ID" value="XM_054356761.1"/>
</dbReference>
<dbReference type="RefSeq" id="XP_054212737.1">
    <molecule id="Q5JTD0-1"/>
    <property type="nucleotide sequence ID" value="XM_054356762.1"/>
</dbReference>
<dbReference type="RefSeq" id="XP_054212738.1">
    <molecule id="Q5JTD0-1"/>
    <property type="nucleotide sequence ID" value="XM_054356763.1"/>
</dbReference>
<dbReference type="RefSeq" id="XP_054212739.1">
    <molecule id="Q5JTD0-1"/>
    <property type="nucleotide sequence ID" value="XM_054356764.1"/>
</dbReference>
<dbReference type="RefSeq" id="XP_054212740.1">
    <molecule id="Q5JTD0-1"/>
    <property type="nucleotide sequence ID" value="XM_054356765.1"/>
</dbReference>
<dbReference type="RefSeq" id="XP_054212741.1">
    <molecule id="Q5JTD0-1"/>
    <property type="nucleotide sequence ID" value="XM_054356766.1"/>
</dbReference>
<dbReference type="RefSeq" id="XP_054212742.1">
    <molecule id="Q5JTD0-1"/>
    <property type="nucleotide sequence ID" value="XM_054356767.1"/>
</dbReference>
<dbReference type="RefSeq" id="XP_054212743.1">
    <molecule id="Q5JTD0-1"/>
    <property type="nucleotide sequence ID" value="XM_054356768.1"/>
</dbReference>
<dbReference type="RefSeq" id="XP_054212744.1">
    <molecule id="Q5JTD0-1"/>
    <property type="nucleotide sequence ID" value="XM_054356769.1"/>
</dbReference>
<dbReference type="RefSeq" id="XP_054212745.1">
    <molecule id="Q5JTD0-1"/>
    <property type="nucleotide sequence ID" value="XM_054356770.1"/>
</dbReference>
<dbReference type="RefSeq" id="XP_054212746.1">
    <molecule id="Q5JTD0-1"/>
    <property type="nucleotide sequence ID" value="XM_054356771.1"/>
</dbReference>
<dbReference type="RefSeq" id="XP_054212747.1">
    <molecule id="Q5JTD0-1"/>
    <property type="nucleotide sequence ID" value="XM_054356772.1"/>
</dbReference>
<dbReference type="RefSeq" id="XP_054212748.1">
    <molecule id="Q5JTD0-1"/>
    <property type="nucleotide sequence ID" value="XM_054356773.1"/>
</dbReference>
<dbReference type="RefSeq" id="XP_054212749.1">
    <molecule id="Q5JTD0-2"/>
    <property type="nucleotide sequence ID" value="XM_054356774.1"/>
</dbReference>
<dbReference type="RefSeq" id="XP_054212750.1">
    <molecule id="Q5JTD0-2"/>
    <property type="nucleotide sequence ID" value="XM_054356775.1"/>
</dbReference>
<dbReference type="RefSeq" id="XP_054212751.1">
    <molecule id="Q5JTD0-2"/>
    <property type="nucleotide sequence ID" value="XM_054356776.1"/>
</dbReference>
<dbReference type="RefSeq" id="XP_054212752.1">
    <molecule id="Q5JTD0-2"/>
    <property type="nucleotide sequence ID" value="XM_054356777.1"/>
</dbReference>
<dbReference type="RefSeq" id="XP_054212753.1">
    <molecule id="Q5JTD0-2"/>
    <property type="nucleotide sequence ID" value="XM_054356778.1"/>
</dbReference>
<dbReference type="RefSeq" id="XP_054212754.1">
    <molecule id="Q5JTD0-2"/>
    <property type="nucleotide sequence ID" value="XM_054356779.1"/>
</dbReference>
<dbReference type="RefSeq" id="XP_054212755.1">
    <molecule id="Q5JTD0-2"/>
    <property type="nucleotide sequence ID" value="XM_054356780.1"/>
</dbReference>
<dbReference type="RefSeq" id="XP_054212756.1">
    <molecule id="Q5JTD0-2"/>
    <property type="nucleotide sequence ID" value="XM_054356781.1"/>
</dbReference>
<dbReference type="RefSeq" id="XP_054212757.1">
    <molecule id="Q5JTD0-2"/>
    <property type="nucleotide sequence ID" value="XM_054356782.1"/>
</dbReference>
<dbReference type="RefSeq" id="XP_054212758.1">
    <molecule id="Q5JTD0-2"/>
    <property type="nucleotide sequence ID" value="XM_054356783.1"/>
</dbReference>
<dbReference type="RefSeq" id="XP_054212759.1">
    <molecule id="Q5JTD0-2"/>
    <property type="nucleotide sequence ID" value="XM_054356784.1"/>
</dbReference>
<dbReference type="RefSeq" id="XP_054212760.1">
    <molecule id="Q5JTD0-2"/>
    <property type="nucleotide sequence ID" value="XM_054356785.1"/>
</dbReference>
<dbReference type="RefSeq" id="XP_054212761.1">
    <molecule id="Q5JTD0-2"/>
    <property type="nucleotide sequence ID" value="XM_054356786.1"/>
</dbReference>
<dbReference type="RefSeq" id="XP_054212762.1">
    <molecule id="Q5JTD0-2"/>
    <property type="nucleotide sequence ID" value="XM_054356787.1"/>
</dbReference>
<dbReference type="RefSeq" id="XP_054212763.1">
    <molecule id="Q5JTD0-2"/>
    <property type="nucleotide sequence ID" value="XM_054356788.1"/>
</dbReference>
<dbReference type="RefSeq" id="XP_054212764.1">
    <molecule id="Q5JTD0-2"/>
    <property type="nucleotide sequence ID" value="XM_054356789.1"/>
</dbReference>
<dbReference type="SMR" id="Q5JTD0"/>
<dbReference type="BioGRID" id="125043">
    <property type="interactions" value="57"/>
</dbReference>
<dbReference type="FunCoup" id="Q5JTD0">
    <property type="interactions" value="1221"/>
</dbReference>
<dbReference type="IntAct" id="Q5JTD0">
    <property type="interactions" value="32"/>
</dbReference>
<dbReference type="MINT" id="Q5JTD0"/>
<dbReference type="STRING" id="9606.ENSP00000361522"/>
<dbReference type="GlyGen" id="Q5JTD0">
    <property type="glycosylation" value="3 sites, 1 N-linked glycan (1 site)"/>
</dbReference>
<dbReference type="iPTMnet" id="Q5JTD0"/>
<dbReference type="PhosphoSitePlus" id="Q5JTD0"/>
<dbReference type="BioMuta" id="TJAP1"/>
<dbReference type="DMDM" id="74742134"/>
<dbReference type="jPOST" id="Q5JTD0"/>
<dbReference type="MassIVE" id="Q5JTD0"/>
<dbReference type="PaxDb" id="9606-ENSP00000361522"/>
<dbReference type="PeptideAtlas" id="Q5JTD0"/>
<dbReference type="ProteomicsDB" id="63213">
    <molecule id="Q5JTD0-1"/>
</dbReference>
<dbReference type="ProteomicsDB" id="63214">
    <molecule id="Q5JTD0-2"/>
</dbReference>
<dbReference type="ProteomicsDB" id="63215">
    <molecule id="Q5JTD0-3"/>
</dbReference>
<dbReference type="ProteomicsDB" id="63216">
    <molecule id="Q5JTD0-4"/>
</dbReference>
<dbReference type="Pumba" id="Q5JTD0"/>
<dbReference type="Antibodypedia" id="16501">
    <property type="antibodies" value="142 antibodies from 24 providers"/>
</dbReference>
<dbReference type="DNASU" id="93643"/>
<dbReference type="Ensembl" id="ENST00000259751.5">
    <molecule id="Q5JTD0-2"/>
    <property type="protein sequence ID" value="ENSP00000259751.1"/>
    <property type="gene ID" value="ENSG00000137221.14"/>
</dbReference>
<dbReference type="Ensembl" id="ENST00000372444.6">
    <molecule id="Q5JTD0-2"/>
    <property type="protein sequence ID" value="ENSP00000361521.2"/>
    <property type="gene ID" value="ENSG00000137221.14"/>
</dbReference>
<dbReference type="Ensembl" id="ENST00000372445.9">
    <molecule id="Q5JTD0-1"/>
    <property type="protein sequence ID" value="ENSP00000361522.5"/>
    <property type="gene ID" value="ENSG00000137221.14"/>
</dbReference>
<dbReference type="Ensembl" id="ENST00000372449.6">
    <molecule id="Q5JTD0-1"/>
    <property type="protein sequence ID" value="ENSP00000361527.1"/>
    <property type="gene ID" value="ENSG00000137221.14"/>
</dbReference>
<dbReference type="Ensembl" id="ENST00000372452.5">
    <molecule id="Q5JTD0-2"/>
    <property type="protein sequence ID" value="ENSP00000361530.1"/>
    <property type="gene ID" value="ENSG00000137221.14"/>
</dbReference>
<dbReference type="Ensembl" id="ENST00000436109.6">
    <molecule id="Q5JTD0-2"/>
    <property type="protein sequence ID" value="ENSP00000407080.2"/>
    <property type="gene ID" value="ENSG00000137221.14"/>
</dbReference>
<dbReference type="Ensembl" id="ENST00000438588.6">
    <molecule id="Q5JTD0-1"/>
    <property type="protein sequence ID" value="ENSP00000408769.2"/>
    <property type="gene ID" value="ENSG00000137221.14"/>
</dbReference>
<dbReference type="GeneID" id="93643"/>
<dbReference type="KEGG" id="hsa:93643"/>
<dbReference type="MANE-Select" id="ENST00000372449.6">
    <property type="protein sequence ID" value="ENSP00000361527.1"/>
    <property type="RefSeq nucleotide sequence ID" value="NM_001350562.2"/>
    <property type="RefSeq protein sequence ID" value="NP_001337491.1"/>
</dbReference>
<dbReference type="UCSC" id="uc003ovc.3">
    <molecule id="Q5JTD0-1"/>
    <property type="organism name" value="human"/>
</dbReference>
<dbReference type="AGR" id="HGNC:17949"/>
<dbReference type="CTD" id="93643"/>
<dbReference type="DisGeNET" id="93643"/>
<dbReference type="GeneCards" id="TJAP1"/>
<dbReference type="HGNC" id="HGNC:17949">
    <property type="gene designation" value="TJAP1"/>
</dbReference>
<dbReference type="HPA" id="ENSG00000137221">
    <property type="expression patterns" value="Low tissue specificity"/>
</dbReference>
<dbReference type="MIM" id="612658">
    <property type="type" value="gene"/>
</dbReference>
<dbReference type="neXtProt" id="NX_Q5JTD0"/>
<dbReference type="OpenTargets" id="ENSG00000137221"/>
<dbReference type="PharmGKB" id="PA38268"/>
<dbReference type="VEuPathDB" id="HostDB:ENSG00000137221"/>
<dbReference type="eggNOG" id="ENOG502QRZ1">
    <property type="taxonomic scope" value="Eukaryota"/>
</dbReference>
<dbReference type="GeneTree" id="ENSGT00940000161543"/>
<dbReference type="HOGENOM" id="CLU_032139_0_0_1"/>
<dbReference type="InParanoid" id="Q5JTD0"/>
<dbReference type="OMA" id="VHVDMTC"/>
<dbReference type="OrthoDB" id="10068192at2759"/>
<dbReference type="PAN-GO" id="Q5JTD0">
    <property type="GO annotations" value="2 GO annotations based on evolutionary models"/>
</dbReference>
<dbReference type="PhylomeDB" id="Q5JTD0"/>
<dbReference type="TreeFam" id="TF331612"/>
<dbReference type="PathwayCommons" id="Q5JTD0"/>
<dbReference type="SignaLink" id="Q5JTD0"/>
<dbReference type="BioGRID-ORCS" id="93643">
    <property type="hits" value="16 hits in 1158 CRISPR screens"/>
</dbReference>
<dbReference type="ChiTaRS" id="TJAP1">
    <property type="organism name" value="human"/>
</dbReference>
<dbReference type="GeneWiki" id="TJAP1"/>
<dbReference type="GenomeRNAi" id="93643"/>
<dbReference type="Pharos" id="Q5JTD0">
    <property type="development level" value="Tbio"/>
</dbReference>
<dbReference type="PRO" id="PR:Q5JTD0"/>
<dbReference type="Proteomes" id="UP000005640">
    <property type="component" value="Chromosome 6"/>
</dbReference>
<dbReference type="RNAct" id="Q5JTD0">
    <property type="molecule type" value="protein"/>
</dbReference>
<dbReference type="Bgee" id="ENSG00000137221">
    <property type="expression patterns" value="Expressed in secondary oocyte and 189 other cell types or tissues"/>
</dbReference>
<dbReference type="ExpressionAtlas" id="Q5JTD0">
    <property type="expression patterns" value="baseline and differential"/>
</dbReference>
<dbReference type="GO" id="GO:0005923">
    <property type="term" value="C:bicellular tight junction"/>
    <property type="evidence" value="ECO:0007669"/>
    <property type="project" value="UniProtKB-SubCell"/>
</dbReference>
<dbReference type="GO" id="GO:0005768">
    <property type="term" value="C:endosome"/>
    <property type="evidence" value="ECO:0007669"/>
    <property type="project" value="Ensembl"/>
</dbReference>
<dbReference type="GO" id="GO:0005794">
    <property type="term" value="C:Golgi apparatus"/>
    <property type="evidence" value="ECO:0000314"/>
    <property type="project" value="HPA"/>
</dbReference>
<dbReference type="GO" id="GO:0005886">
    <property type="term" value="C:plasma membrane"/>
    <property type="evidence" value="ECO:0007669"/>
    <property type="project" value="UniProtKB-SubCell"/>
</dbReference>
<dbReference type="GO" id="GO:0005802">
    <property type="term" value="C:trans-Golgi network"/>
    <property type="evidence" value="ECO:0000318"/>
    <property type="project" value="GO_Central"/>
</dbReference>
<dbReference type="GO" id="GO:0007030">
    <property type="term" value="P:Golgi organization"/>
    <property type="evidence" value="ECO:0000318"/>
    <property type="project" value="GO_Central"/>
</dbReference>
<dbReference type="InterPro" id="IPR043441">
    <property type="entry name" value="Tjap1/BEGAIN"/>
</dbReference>
<dbReference type="InterPro" id="IPR043470">
    <property type="entry name" value="Tjap1_dom"/>
</dbReference>
<dbReference type="PANTHER" id="PTHR28664">
    <property type="entry name" value="TIGHT JUNCTION-ASSOCIATED PROTEIN 1"/>
    <property type="match status" value="1"/>
</dbReference>
<dbReference type="PANTHER" id="PTHR28664:SF3">
    <property type="entry name" value="TIGHT JUNCTION-ASSOCIATED PROTEIN 1"/>
    <property type="match status" value="1"/>
</dbReference>
<dbReference type="Pfam" id="PF15453">
    <property type="entry name" value="Pilt"/>
    <property type="match status" value="2"/>
</dbReference>
<evidence type="ECO:0000250" key="1">
    <source>
        <dbReference type="UniProtKB" id="Q9DCD5"/>
    </source>
</evidence>
<evidence type="ECO:0000255" key="2"/>
<evidence type="ECO:0000256" key="3">
    <source>
        <dbReference type="SAM" id="MobiDB-lite"/>
    </source>
</evidence>
<evidence type="ECO:0000269" key="4">
    <source>
    </source>
</evidence>
<evidence type="ECO:0000303" key="5">
    <source>
    </source>
</evidence>
<evidence type="ECO:0000303" key="6">
    <source>
    </source>
</evidence>
<evidence type="ECO:0000303" key="7">
    <source>
    </source>
</evidence>
<evidence type="ECO:0000303" key="8">
    <source>
    </source>
</evidence>
<evidence type="ECO:0000305" key="9"/>
<evidence type="ECO:0000312" key="10">
    <source>
        <dbReference type="HGNC" id="HGNC:17949"/>
    </source>
</evidence>
<evidence type="ECO:0007744" key="11">
    <source>
    </source>
</evidence>
<evidence type="ECO:0007744" key="12">
    <source>
    </source>
</evidence>
<evidence type="ECO:0007744" key="13">
    <source>
    </source>
</evidence>
<evidence type="ECO:0007744" key="14">
    <source>
    </source>
</evidence>
<evidence type="ECO:0007744" key="15">
    <source>
    </source>
</evidence>
<evidence type="ECO:0007744" key="16">
    <source>
    </source>
</evidence>
<evidence type="ECO:0007744" key="17">
    <source>
    </source>
</evidence>
<organism>
    <name type="scientific">Homo sapiens</name>
    <name type="common">Human</name>
    <dbReference type="NCBI Taxonomy" id="9606"/>
    <lineage>
        <taxon>Eukaryota</taxon>
        <taxon>Metazoa</taxon>
        <taxon>Chordata</taxon>
        <taxon>Craniata</taxon>
        <taxon>Vertebrata</taxon>
        <taxon>Euteleostomi</taxon>
        <taxon>Mammalia</taxon>
        <taxon>Eutheria</taxon>
        <taxon>Euarchontoglires</taxon>
        <taxon>Primates</taxon>
        <taxon>Haplorrhini</taxon>
        <taxon>Catarrhini</taxon>
        <taxon>Hominidae</taxon>
        <taxon>Homo</taxon>
    </lineage>
</organism>
<reference key="1">
    <citation type="journal article" date="2004" name="Nat. Genet.">
        <title>Complete sequencing and characterization of 21,243 full-length human cDNAs.</title>
        <authorList>
            <person name="Ota T."/>
            <person name="Suzuki Y."/>
            <person name="Nishikawa T."/>
            <person name="Otsuki T."/>
            <person name="Sugiyama T."/>
            <person name="Irie R."/>
            <person name="Wakamatsu A."/>
            <person name="Hayashi K."/>
            <person name="Sato H."/>
            <person name="Nagai K."/>
            <person name="Kimura K."/>
            <person name="Makita H."/>
            <person name="Sekine M."/>
            <person name="Obayashi M."/>
            <person name="Nishi T."/>
            <person name="Shibahara T."/>
            <person name="Tanaka T."/>
            <person name="Ishii S."/>
            <person name="Yamamoto J."/>
            <person name="Saito K."/>
            <person name="Kawai Y."/>
            <person name="Isono Y."/>
            <person name="Nakamura Y."/>
            <person name="Nagahari K."/>
            <person name="Murakami K."/>
            <person name="Yasuda T."/>
            <person name="Iwayanagi T."/>
            <person name="Wagatsuma M."/>
            <person name="Shiratori A."/>
            <person name="Sudo H."/>
            <person name="Hosoiri T."/>
            <person name="Kaku Y."/>
            <person name="Kodaira H."/>
            <person name="Kondo H."/>
            <person name="Sugawara M."/>
            <person name="Takahashi M."/>
            <person name="Kanda K."/>
            <person name="Yokoi T."/>
            <person name="Furuya T."/>
            <person name="Kikkawa E."/>
            <person name="Omura Y."/>
            <person name="Abe K."/>
            <person name="Kamihara K."/>
            <person name="Katsuta N."/>
            <person name="Sato K."/>
            <person name="Tanikawa M."/>
            <person name="Yamazaki M."/>
            <person name="Ninomiya K."/>
            <person name="Ishibashi T."/>
            <person name="Yamashita H."/>
            <person name="Murakawa K."/>
            <person name="Fujimori K."/>
            <person name="Tanai H."/>
            <person name="Kimata M."/>
            <person name="Watanabe M."/>
            <person name="Hiraoka S."/>
            <person name="Chiba Y."/>
            <person name="Ishida S."/>
            <person name="Ono Y."/>
            <person name="Takiguchi S."/>
            <person name="Watanabe S."/>
            <person name="Yosida M."/>
            <person name="Hotuta T."/>
            <person name="Kusano J."/>
            <person name="Kanehori K."/>
            <person name="Takahashi-Fujii A."/>
            <person name="Hara H."/>
            <person name="Tanase T.-O."/>
            <person name="Nomura Y."/>
            <person name="Togiya S."/>
            <person name="Komai F."/>
            <person name="Hara R."/>
            <person name="Takeuchi K."/>
            <person name="Arita M."/>
            <person name="Imose N."/>
            <person name="Musashino K."/>
            <person name="Yuuki H."/>
            <person name="Oshima A."/>
            <person name="Sasaki N."/>
            <person name="Aotsuka S."/>
            <person name="Yoshikawa Y."/>
            <person name="Matsunawa H."/>
            <person name="Ichihara T."/>
            <person name="Shiohata N."/>
            <person name="Sano S."/>
            <person name="Moriya S."/>
            <person name="Momiyama H."/>
            <person name="Satoh N."/>
            <person name="Takami S."/>
            <person name="Terashima Y."/>
            <person name="Suzuki O."/>
            <person name="Nakagawa S."/>
            <person name="Senoh A."/>
            <person name="Mizoguchi H."/>
            <person name="Goto Y."/>
            <person name="Shimizu F."/>
            <person name="Wakebe H."/>
            <person name="Hishigaki H."/>
            <person name="Watanabe T."/>
            <person name="Sugiyama A."/>
            <person name="Takemoto M."/>
            <person name="Kawakami B."/>
            <person name="Yamazaki M."/>
            <person name="Watanabe K."/>
            <person name="Kumagai A."/>
            <person name="Itakura S."/>
            <person name="Fukuzumi Y."/>
            <person name="Fujimori Y."/>
            <person name="Komiyama M."/>
            <person name="Tashiro H."/>
            <person name="Tanigami A."/>
            <person name="Fujiwara T."/>
            <person name="Ono T."/>
            <person name="Yamada K."/>
            <person name="Fujii Y."/>
            <person name="Ozaki K."/>
            <person name="Hirao M."/>
            <person name="Ohmori Y."/>
            <person name="Kawabata A."/>
            <person name="Hikiji T."/>
            <person name="Kobatake N."/>
            <person name="Inagaki H."/>
            <person name="Ikema Y."/>
            <person name="Okamoto S."/>
            <person name="Okitani R."/>
            <person name="Kawakami T."/>
            <person name="Noguchi S."/>
            <person name="Itoh T."/>
            <person name="Shigeta K."/>
            <person name="Senba T."/>
            <person name="Matsumura K."/>
            <person name="Nakajima Y."/>
            <person name="Mizuno T."/>
            <person name="Morinaga M."/>
            <person name="Sasaki M."/>
            <person name="Togashi T."/>
            <person name="Oyama M."/>
            <person name="Hata H."/>
            <person name="Watanabe M."/>
            <person name="Komatsu T."/>
            <person name="Mizushima-Sugano J."/>
            <person name="Satoh T."/>
            <person name="Shirai Y."/>
            <person name="Takahashi Y."/>
            <person name="Nakagawa K."/>
            <person name="Okumura K."/>
            <person name="Nagase T."/>
            <person name="Nomura N."/>
            <person name="Kikuchi H."/>
            <person name="Masuho Y."/>
            <person name="Yamashita R."/>
            <person name="Nakai K."/>
            <person name="Yada T."/>
            <person name="Nakamura Y."/>
            <person name="Ohara O."/>
            <person name="Isogai T."/>
            <person name="Sugano S."/>
        </authorList>
    </citation>
    <scope>NUCLEOTIDE SEQUENCE [LARGE SCALE MRNA] (ISOFORM 2)</scope>
</reference>
<reference key="2">
    <citation type="journal article" date="2007" name="BMC Genomics">
        <title>The full-ORF clone resource of the German cDNA consortium.</title>
        <authorList>
            <person name="Bechtel S."/>
            <person name="Rosenfelder H."/>
            <person name="Duda A."/>
            <person name="Schmidt C.P."/>
            <person name="Ernst U."/>
            <person name="Wellenreuther R."/>
            <person name="Mehrle A."/>
            <person name="Schuster C."/>
            <person name="Bahr A."/>
            <person name="Bloecker H."/>
            <person name="Heubner D."/>
            <person name="Hoerlein A."/>
            <person name="Michel G."/>
            <person name="Wedler H."/>
            <person name="Koehrer K."/>
            <person name="Ottenwaelder B."/>
            <person name="Poustka A."/>
            <person name="Wiemann S."/>
            <person name="Schupp I."/>
        </authorList>
    </citation>
    <scope>NUCLEOTIDE SEQUENCE [LARGE SCALE MRNA] (ISOFORMS 3 AND 4)</scope>
    <source>
        <tissue>Testis</tissue>
        <tissue>Uterus</tissue>
    </source>
</reference>
<reference key="3">
    <citation type="journal article" date="2003" name="Nature">
        <title>The DNA sequence and analysis of human chromosome 6.</title>
        <authorList>
            <person name="Mungall A.J."/>
            <person name="Palmer S.A."/>
            <person name="Sims S.K."/>
            <person name="Edwards C.A."/>
            <person name="Ashurst J.L."/>
            <person name="Wilming L."/>
            <person name="Jones M.C."/>
            <person name="Horton R."/>
            <person name="Hunt S.E."/>
            <person name="Scott C.E."/>
            <person name="Gilbert J.G.R."/>
            <person name="Clamp M.E."/>
            <person name="Bethel G."/>
            <person name="Milne S."/>
            <person name="Ainscough R."/>
            <person name="Almeida J.P."/>
            <person name="Ambrose K.D."/>
            <person name="Andrews T.D."/>
            <person name="Ashwell R.I.S."/>
            <person name="Babbage A.K."/>
            <person name="Bagguley C.L."/>
            <person name="Bailey J."/>
            <person name="Banerjee R."/>
            <person name="Barker D.J."/>
            <person name="Barlow K.F."/>
            <person name="Bates K."/>
            <person name="Beare D.M."/>
            <person name="Beasley H."/>
            <person name="Beasley O."/>
            <person name="Bird C.P."/>
            <person name="Blakey S.E."/>
            <person name="Bray-Allen S."/>
            <person name="Brook J."/>
            <person name="Brown A.J."/>
            <person name="Brown J.Y."/>
            <person name="Burford D.C."/>
            <person name="Burrill W."/>
            <person name="Burton J."/>
            <person name="Carder C."/>
            <person name="Carter N.P."/>
            <person name="Chapman J.C."/>
            <person name="Clark S.Y."/>
            <person name="Clark G."/>
            <person name="Clee C.M."/>
            <person name="Clegg S."/>
            <person name="Cobley V."/>
            <person name="Collier R.E."/>
            <person name="Collins J.E."/>
            <person name="Colman L.K."/>
            <person name="Corby N.R."/>
            <person name="Coville G.J."/>
            <person name="Culley K.M."/>
            <person name="Dhami P."/>
            <person name="Davies J."/>
            <person name="Dunn M."/>
            <person name="Earthrowl M.E."/>
            <person name="Ellington A.E."/>
            <person name="Evans K.A."/>
            <person name="Faulkner L."/>
            <person name="Francis M.D."/>
            <person name="Frankish A."/>
            <person name="Frankland J."/>
            <person name="French L."/>
            <person name="Garner P."/>
            <person name="Garnett J."/>
            <person name="Ghori M.J."/>
            <person name="Gilby L.M."/>
            <person name="Gillson C.J."/>
            <person name="Glithero R.J."/>
            <person name="Grafham D.V."/>
            <person name="Grant M."/>
            <person name="Gribble S."/>
            <person name="Griffiths C."/>
            <person name="Griffiths M.N.D."/>
            <person name="Hall R."/>
            <person name="Halls K.S."/>
            <person name="Hammond S."/>
            <person name="Harley J.L."/>
            <person name="Hart E.A."/>
            <person name="Heath P.D."/>
            <person name="Heathcott R."/>
            <person name="Holmes S.J."/>
            <person name="Howden P.J."/>
            <person name="Howe K.L."/>
            <person name="Howell G.R."/>
            <person name="Huckle E."/>
            <person name="Humphray S.J."/>
            <person name="Humphries M.D."/>
            <person name="Hunt A.R."/>
            <person name="Johnson C.M."/>
            <person name="Joy A.A."/>
            <person name="Kay M."/>
            <person name="Keenan S.J."/>
            <person name="Kimberley A.M."/>
            <person name="King A."/>
            <person name="Laird G.K."/>
            <person name="Langford C."/>
            <person name="Lawlor S."/>
            <person name="Leongamornlert D.A."/>
            <person name="Leversha M."/>
            <person name="Lloyd C.R."/>
            <person name="Lloyd D.M."/>
            <person name="Loveland J.E."/>
            <person name="Lovell J."/>
            <person name="Martin S."/>
            <person name="Mashreghi-Mohammadi M."/>
            <person name="Maslen G.L."/>
            <person name="Matthews L."/>
            <person name="McCann O.T."/>
            <person name="McLaren S.J."/>
            <person name="McLay K."/>
            <person name="McMurray A."/>
            <person name="Moore M.J.F."/>
            <person name="Mullikin J.C."/>
            <person name="Niblett D."/>
            <person name="Nickerson T."/>
            <person name="Novik K.L."/>
            <person name="Oliver K."/>
            <person name="Overton-Larty E.K."/>
            <person name="Parker A."/>
            <person name="Patel R."/>
            <person name="Pearce A.V."/>
            <person name="Peck A.I."/>
            <person name="Phillimore B.J.C.T."/>
            <person name="Phillips S."/>
            <person name="Plumb R.W."/>
            <person name="Porter K.M."/>
            <person name="Ramsey Y."/>
            <person name="Ranby S.A."/>
            <person name="Rice C.M."/>
            <person name="Ross M.T."/>
            <person name="Searle S.M."/>
            <person name="Sehra H.K."/>
            <person name="Sheridan E."/>
            <person name="Skuce C.D."/>
            <person name="Smith S."/>
            <person name="Smith M."/>
            <person name="Spraggon L."/>
            <person name="Squares S.L."/>
            <person name="Steward C.A."/>
            <person name="Sycamore N."/>
            <person name="Tamlyn-Hall G."/>
            <person name="Tester J."/>
            <person name="Theaker A.J."/>
            <person name="Thomas D.W."/>
            <person name="Thorpe A."/>
            <person name="Tracey A."/>
            <person name="Tromans A."/>
            <person name="Tubby B."/>
            <person name="Wall M."/>
            <person name="Wallis J.M."/>
            <person name="West A.P."/>
            <person name="White S.S."/>
            <person name="Whitehead S.L."/>
            <person name="Whittaker H."/>
            <person name="Wild A."/>
            <person name="Willey D.J."/>
            <person name="Wilmer T.E."/>
            <person name="Wood J.M."/>
            <person name="Wray P.W."/>
            <person name="Wyatt J.C."/>
            <person name="Young L."/>
            <person name="Younger R.M."/>
            <person name="Bentley D.R."/>
            <person name="Coulson A."/>
            <person name="Durbin R.M."/>
            <person name="Hubbard T."/>
            <person name="Sulston J.E."/>
            <person name="Dunham I."/>
            <person name="Rogers J."/>
            <person name="Beck S."/>
        </authorList>
    </citation>
    <scope>NUCLEOTIDE SEQUENCE [LARGE SCALE GENOMIC DNA]</scope>
</reference>
<reference key="4">
    <citation type="journal article" date="2004" name="Genome Res.">
        <title>The status, quality, and expansion of the NIH full-length cDNA project: the Mammalian Gene Collection (MGC).</title>
        <authorList>
            <consortium name="The MGC Project Team"/>
        </authorList>
    </citation>
    <scope>NUCLEOTIDE SEQUENCE [LARGE SCALE MRNA] (ISOFORMS 1 AND 2)</scope>
    <source>
        <tissue>Muscle</tissue>
        <tissue>Skin</tissue>
    </source>
</reference>
<reference key="5">
    <citation type="journal article" date="2001" name="J. Biol. Chem.">
        <title>Pilt, a novel peripheral membrane protein at tight junctions in epithelial cells.</title>
        <authorList>
            <person name="Kawabe H."/>
            <person name="Nakanishi H."/>
            <person name="Asada M."/>
            <person name="Fukuhara A."/>
            <person name="Morimoto K."/>
            <person name="Takeuchi M."/>
            <person name="Takai Y."/>
        </authorList>
    </citation>
    <scope>INTERACTION WITH DLG1</scope>
    <scope>TISSUE SPECIFICITY</scope>
</reference>
<reference key="6">
    <citation type="journal article" date="2006" name="Nat. Biotechnol.">
        <title>A probability-based approach for high-throughput protein phosphorylation analysis and site localization.</title>
        <authorList>
            <person name="Beausoleil S.A."/>
            <person name="Villen J."/>
            <person name="Gerber S.A."/>
            <person name="Rush J."/>
            <person name="Gygi S.P."/>
        </authorList>
    </citation>
    <scope>IDENTIFICATION BY MASS SPECTROMETRY [LARGE SCALE ANALYSIS]</scope>
    <source>
        <tissue>Cervix carcinoma</tissue>
    </source>
</reference>
<reference key="7">
    <citation type="journal article" date="2008" name="J. Proteome Res.">
        <title>Phosphoproteome of resting human platelets.</title>
        <authorList>
            <person name="Zahedi R.P."/>
            <person name="Lewandrowski U."/>
            <person name="Wiesner J."/>
            <person name="Wortelkamp S."/>
            <person name="Moebius J."/>
            <person name="Schuetz C."/>
            <person name="Walter U."/>
            <person name="Gambaryan S."/>
            <person name="Sickmann A."/>
        </authorList>
    </citation>
    <scope>IDENTIFICATION BY MASS SPECTROMETRY [LARGE SCALE ANALYSIS]</scope>
    <source>
        <tissue>Platelet</tissue>
    </source>
</reference>
<reference key="8">
    <citation type="journal article" date="2008" name="Proc. Natl. Acad. Sci. U.S.A.">
        <title>A quantitative atlas of mitotic phosphorylation.</title>
        <authorList>
            <person name="Dephoure N."/>
            <person name="Zhou C."/>
            <person name="Villen J."/>
            <person name="Beausoleil S.A."/>
            <person name="Bakalarski C.E."/>
            <person name="Elledge S.J."/>
            <person name="Gygi S.P."/>
        </authorList>
    </citation>
    <scope>PHOSPHORYLATION [LARGE SCALE ANALYSIS] AT THR-318; SER-320; SER-345 AND SER-545</scope>
    <scope>IDENTIFICATION BY MASS SPECTROMETRY [LARGE SCALE ANALYSIS]</scope>
    <source>
        <tissue>Cervix carcinoma</tissue>
    </source>
</reference>
<reference key="9">
    <citation type="journal article" date="2009" name="Anal. Chem.">
        <title>Lys-N and trypsin cover complementary parts of the phosphoproteome in a refined SCX-based approach.</title>
        <authorList>
            <person name="Gauci S."/>
            <person name="Helbig A.O."/>
            <person name="Slijper M."/>
            <person name="Krijgsveld J."/>
            <person name="Heck A.J."/>
            <person name="Mohammed S."/>
        </authorList>
    </citation>
    <scope>IDENTIFICATION BY MASS SPECTROMETRY [LARGE SCALE ANALYSIS]</scope>
</reference>
<reference key="10">
    <citation type="journal article" date="2009" name="Sci. Signal.">
        <title>Quantitative phosphoproteomic analysis of T cell receptor signaling reveals system-wide modulation of protein-protein interactions.</title>
        <authorList>
            <person name="Mayya V."/>
            <person name="Lundgren D.H."/>
            <person name="Hwang S.-I."/>
            <person name="Rezaul K."/>
            <person name="Wu L."/>
            <person name="Eng J.K."/>
            <person name="Rodionov V."/>
            <person name="Han D.K."/>
        </authorList>
    </citation>
    <scope>PHOSPHORYLATION [LARGE SCALE ANALYSIS] AT SER-300 AND SER-545</scope>
    <scope>IDENTIFICATION BY MASS SPECTROMETRY [LARGE SCALE ANALYSIS]</scope>
    <source>
        <tissue>Leukemic T-cell</tissue>
    </source>
</reference>
<reference key="11">
    <citation type="journal article" date="2010" name="Sci. Signal.">
        <title>Quantitative phosphoproteomics reveals widespread full phosphorylation site occupancy during mitosis.</title>
        <authorList>
            <person name="Olsen J.V."/>
            <person name="Vermeulen M."/>
            <person name="Santamaria A."/>
            <person name="Kumar C."/>
            <person name="Miller M.L."/>
            <person name="Jensen L.J."/>
            <person name="Gnad F."/>
            <person name="Cox J."/>
            <person name="Jensen T.S."/>
            <person name="Nigg E.A."/>
            <person name="Brunak S."/>
            <person name="Mann M."/>
        </authorList>
    </citation>
    <scope>PHOSPHORYLATION [LARGE SCALE ANALYSIS] AT SER-300; SER-491 AND SER-545</scope>
    <scope>IDENTIFICATION BY MASS SPECTROMETRY [LARGE SCALE ANALYSIS]</scope>
    <source>
        <tissue>Cervix carcinoma</tissue>
    </source>
</reference>
<reference key="12">
    <citation type="journal article" date="2011" name="Sci. Signal.">
        <title>System-wide temporal characterization of the proteome and phosphoproteome of human embryonic stem cell differentiation.</title>
        <authorList>
            <person name="Rigbolt K.T."/>
            <person name="Prokhorova T.A."/>
            <person name="Akimov V."/>
            <person name="Henningsen J."/>
            <person name="Johansen P.T."/>
            <person name="Kratchmarova I."/>
            <person name="Kassem M."/>
            <person name="Mann M."/>
            <person name="Olsen J.V."/>
            <person name="Blagoev B."/>
        </authorList>
    </citation>
    <scope>PHOSPHORYLATION [LARGE SCALE ANALYSIS] AT SER-300; SER-491 AND SER-545</scope>
    <scope>IDENTIFICATION BY MASS SPECTROMETRY [LARGE SCALE ANALYSIS]</scope>
</reference>
<reference key="13">
    <citation type="journal article" date="2012" name="Proc. Natl. Acad. Sci. U.S.A.">
        <title>N-terminal acetylome analyses and functional insights of the N-terminal acetyltransferase NatB.</title>
        <authorList>
            <person name="Van Damme P."/>
            <person name="Lasa M."/>
            <person name="Polevoda B."/>
            <person name="Gazquez C."/>
            <person name="Elosegui-Artola A."/>
            <person name="Kim D.S."/>
            <person name="De Juan-Pardo E."/>
            <person name="Demeyer K."/>
            <person name="Hole K."/>
            <person name="Larrea E."/>
            <person name="Timmerman E."/>
            <person name="Prieto J."/>
            <person name="Arnesen T."/>
            <person name="Sherman F."/>
            <person name="Gevaert K."/>
            <person name="Aldabe R."/>
        </authorList>
    </citation>
    <scope>ACETYLATION [LARGE SCALE ANALYSIS] AT THR-2</scope>
    <scope>CLEAVAGE OF INITIATOR METHIONINE [LARGE SCALE ANALYSIS]</scope>
    <scope>IDENTIFICATION BY MASS SPECTROMETRY [LARGE SCALE ANALYSIS]</scope>
</reference>
<reference key="14">
    <citation type="journal article" date="2013" name="J. Proteome Res.">
        <title>Toward a comprehensive characterization of a human cancer cell phosphoproteome.</title>
        <authorList>
            <person name="Zhou H."/>
            <person name="Di Palma S."/>
            <person name="Preisinger C."/>
            <person name="Peng M."/>
            <person name="Polat A.N."/>
            <person name="Heck A.J."/>
            <person name="Mohammed S."/>
        </authorList>
    </citation>
    <scope>PHOSPHORYLATION [LARGE SCALE ANALYSIS] AT SER-300; SER-345; THR-422 AND SER-545</scope>
    <scope>IDENTIFICATION BY MASS SPECTROMETRY [LARGE SCALE ANALYSIS]</scope>
    <source>
        <tissue>Cervix carcinoma</tissue>
        <tissue>Erythroleukemia</tissue>
    </source>
</reference>
<reference key="15">
    <citation type="journal article" date="2014" name="J. Proteomics">
        <title>An enzyme assisted RP-RPLC approach for in-depth analysis of human liver phosphoproteome.</title>
        <authorList>
            <person name="Bian Y."/>
            <person name="Song C."/>
            <person name="Cheng K."/>
            <person name="Dong M."/>
            <person name="Wang F."/>
            <person name="Huang J."/>
            <person name="Sun D."/>
            <person name="Wang L."/>
            <person name="Ye M."/>
            <person name="Zou H."/>
        </authorList>
    </citation>
    <scope>PHOSPHORYLATION [LARGE SCALE ANALYSIS] AT SER-300; THR-422 AND SER-491</scope>
    <scope>IDENTIFICATION BY MASS SPECTROMETRY [LARGE SCALE ANALYSIS]</scope>
    <source>
        <tissue>Liver</tissue>
    </source>
</reference>
<feature type="initiator methionine" description="Removed" evidence="15">
    <location>
        <position position="1"/>
    </location>
</feature>
<feature type="chain" id="PRO_0000072550" description="Tight junction-associated protein 1">
    <location>
        <begin position="2"/>
        <end position="557"/>
    </location>
</feature>
<feature type="region of interest" description="Disordered" evidence="3">
    <location>
        <begin position="1"/>
        <end position="37"/>
    </location>
</feature>
<feature type="region of interest" description="Disordered" evidence="3">
    <location>
        <begin position="266"/>
        <end position="303"/>
    </location>
</feature>
<feature type="region of interest" description="Disordered" evidence="3">
    <location>
        <begin position="309"/>
        <end position="328"/>
    </location>
</feature>
<feature type="region of interest" description="Disordered" evidence="3">
    <location>
        <begin position="364"/>
        <end position="409"/>
    </location>
</feature>
<feature type="region of interest" description="Disordered" evidence="3">
    <location>
        <begin position="439"/>
        <end position="557"/>
    </location>
</feature>
<feature type="coiled-coil region" evidence="2">
    <location>
        <begin position="42"/>
        <end position="171"/>
    </location>
</feature>
<feature type="compositionally biased region" description="Basic and acidic residues" evidence="3">
    <location>
        <begin position="14"/>
        <end position="23"/>
    </location>
</feature>
<feature type="compositionally biased region" description="Pro residues" evidence="3">
    <location>
        <begin position="274"/>
        <end position="286"/>
    </location>
</feature>
<feature type="compositionally biased region" description="Pro residues" evidence="3">
    <location>
        <begin position="316"/>
        <end position="325"/>
    </location>
</feature>
<feature type="compositionally biased region" description="Polar residues" evidence="3">
    <location>
        <begin position="378"/>
        <end position="388"/>
    </location>
</feature>
<feature type="compositionally biased region" description="Low complexity" evidence="3">
    <location>
        <begin position="394"/>
        <end position="405"/>
    </location>
</feature>
<feature type="compositionally biased region" description="Basic and acidic residues" evidence="3">
    <location>
        <begin position="439"/>
        <end position="456"/>
    </location>
</feature>
<feature type="compositionally biased region" description="Basic residues" evidence="3">
    <location>
        <begin position="530"/>
        <end position="542"/>
    </location>
</feature>
<feature type="compositionally biased region" description="Polar residues" evidence="3">
    <location>
        <begin position="546"/>
        <end position="557"/>
    </location>
</feature>
<feature type="modified residue" description="N-acetylthreonine" evidence="15">
    <location>
        <position position="2"/>
    </location>
</feature>
<feature type="modified residue" description="Phosphoserine" evidence="12 13 14 16 17">
    <location>
        <position position="300"/>
    </location>
</feature>
<feature type="modified residue" description="Phosphothreonine" evidence="11">
    <location>
        <position position="318"/>
    </location>
</feature>
<feature type="modified residue" description="Phosphoserine" evidence="11">
    <location>
        <position position="320"/>
    </location>
</feature>
<feature type="modified residue" description="Phosphoserine" evidence="11 16">
    <location>
        <position position="345"/>
    </location>
</feature>
<feature type="modified residue" description="Phosphothreonine" evidence="16 17">
    <location>
        <position position="422"/>
    </location>
</feature>
<feature type="modified residue" description="Phosphoserine" evidence="13 14 17">
    <location>
        <position position="491"/>
    </location>
</feature>
<feature type="modified residue" description="Phosphoserine" evidence="11 12 13 14 16">
    <location>
        <position position="545"/>
    </location>
</feature>
<feature type="splice variant" id="VSP_015999" description="In isoform 4." evidence="8">
    <location>
        <begin position="1"/>
        <end position="65"/>
    </location>
</feature>
<feature type="splice variant" id="VSP_016000" description="In isoform 3." evidence="8">
    <location>
        <begin position="44"/>
        <end position="557"/>
    </location>
</feature>
<feature type="splice variant" id="VSP_016001" description="In isoform 4." evidence="8">
    <original>L</original>
    <variation>M</variation>
    <location>
        <position position="66"/>
    </location>
</feature>
<feature type="splice variant" id="VSP_016002" description="In isoform 2 and isoform 4." evidence="6 7 8">
    <location>
        <begin position="120"/>
        <end position="129"/>
    </location>
</feature>
<feature type="sequence conflict" description="In Ref. 1; BAB14867." evidence="9" ref="1">
    <original>L</original>
    <variation>P</variation>
    <location>
        <position position="174"/>
    </location>
</feature>
<feature type="sequence conflict" description="In Ref. 2; CAI46221." evidence="9" ref="2">
    <original>HF</original>
    <variation>QV</variation>
    <location>
        <begin position="185"/>
        <end position="186"/>
    </location>
</feature>
<name>TJAP1_HUMAN</name>
<sequence length="557" mass="61821">MTSAAPAKKPYRKAPPEHRELRLEIPGSRLEQEEPLTDAERMKLLQEENEELRRRLASATRRTEALERELEIGQDCLELELGQSREELDKFKDKFRRLQNSYTASQRTNQELEDKLHTLASLSHSWIFAIKKAEMDRKTLDWEIVELTNKLLDAKNTINKLEELNERYRLDCNLAVQLLKCNKSHFRNHKFADLPCELQDMVRKHLHSGQEAASPGPAPSLAPGAVVPTSVIARVLEKPESLLLNSAQSGSAGRPLAEDVFVHVDMSEGVPGDPASPPAPGSPTPQPNGECHSLGTARGSPEEELPLPAFEKLNPYPTPSPPHPLYPGRRVIEFSEDKVRIPRNSPLPNCTYATRQAISLSLVEEGSERARPSPVPSTPASAQASPHHQPSPAPLTLSAPASSASSEEDLLVSWQRAFVDRTPPPAAVAQRTAFGRDALPELQRHFAHSPADRDEVVQAPSARPEESELLLPTEPDSGFPREEEELNLPISPEEERQSLLPINRGTEEGPGTSHTEGRAWPLPSSSRPQRSPKRMGVHHLHRKDSLTQAQEQGNLLN</sequence>
<comment type="function">
    <text evidence="1">Plays a role in regulating the structure of the Golgi apparatus.</text>
</comment>
<comment type="subunit">
    <text evidence="1 4">Interacts with DLG1 (PubMed:11602598). Interacts with ARF6 (GTP-bound form) (By similarity).</text>
</comment>
<comment type="interaction">
    <interactant intactId="EBI-2814077">
        <id>Q5JTD0</id>
    </interactant>
    <interactant intactId="EBI-5916454">
        <id>A6NEM1</id>
        <label>GOLGA6L9</label>
    </interactant>
    <organismsDiffer>false</organismsDiffer>
    <experiments>3</experiments>
</comment>
<comment type="interaction">
    <interactant intactId="EBI-2814077">
        <id>Q5JTD0</id>
    </interactant>
    <interactant intactId="EBI-2949715">
        <id>O95678</id>
        <label>KRT75</label>
    </interactant>
    <organismsDiffer>false</organismsDiffer>
    <experiments>3</experiments>
</comment>
<comment type="interaction">
    <interactant intactId="EBI-2814077">
        <id>Q5JTD0</id>
    </interactant>
    <interactant intactId="EBI-16439278">
        <id>Q6FHY5</id>
        <label>MEOX2</label>
    </interactant>
    <organismsDiffer>false</organismsDiffer>
    <experiments>3</experiments>
</comment>
<comment type="interaction">
    <interactant intactId="EBI-2814077">
        <id>Q5JTD0</id>
    </interactant>
    <interactant intactId="EBI-2130429">
        <id>Q9BYV2</id>
        <label>TRIM54</label>
    </interactant>
    <organismsDiffer>false</organismsDiffer>
    <experiments>3</experiments>
</comment>
<comment type="subcellular location">
    <subcellularLocation>
        <location evidence="1">Golgi apparatus</location>
        <location evidence="1">trans-Golgi network</location>
    </subcellularLocation>
    <subcellularLocation>
        <location evidence="1">Cell junction</location>
        <location evidence="1">Tight junction</location>
    </subcellularLocation>
    <subcellularLocation>
        <location evidence="1">Cell membrane</location>
        <topology evidence="9">Peripheral membrane protein</topology>
    </subcellularLocation>
    <text evidence="1">Recruited to tight junctions (TJ) during late stages of maturation of the TJ complexes. Excluded from adherens junctions and desmosomes.</text>
</comment>
<comment type="alternative products">
    <event type="alternative splicing"/>
    <isoform>
        <id>Q5JTD0-1</id>
        <name>1</name>
        <sequence type="displayed"/>
    </isoform>
    <isoform>
        <id>Q5JTD0-2</id>
        <name>2</name>
        <sequence type="described" ref="VSP_016002"/>
    </isoform>
    <isoform>
        <id>Q5JTD0-3</id>
        <name>3</name>
        <sequence type="described" ref="VSP_016000"/>
    </isoform>
    <isoform>
        <id>Q5JTD0-4</id>
        <name>4</name>
        <sequence type="described" ref="VSP_015999 VSP_016001 VSP_016002"/>
    </isoform>
</comment>
<comment type="tissue specificity">
    <text evidence="4">Ubiquitously expressed.</text>
</comment>
<proteinExistence type="evidence at protein level"/>
<keyword id="KW-0007">Acetylation</keyword>
<keyword id="KW-0025">Alternative splicing</keyword>
<keyword id="KW-0965">Cell junction</keyword>
<keyword id="KW-1003">Cell membrane</keyword>
<keyword id="KW-0175">Coiled coil</keyword>
<keyword id="KW-0333">Golgi apparatus</keyword>
<keyword id="KW-0472">Membrane</keyword>
<keyword id="KW-0597">Phosphoprotein</keyword>
<keyword id="KW-1267">Proteomics identification</keyword>
<keyword id="KW-1185">Reference proteome</keyword>
<keyword id="KW-0796">Tight junction</keyword>
<gene>
    <name evidence="10" type="primary">TJAP1</name>
    <name evidence="5" type="synonym">PILT</name>
    <name type="synonym">TJP4</name>
</gene>